<sequence length="393" mass="45486">MLDPFSEKAKELLKEFGSINDFLNSIPRIVDVEEVIERVKIASDRKLLEGFVDIEDIKDLAQFYALLGALSYSPYGLELELVKKANILLYSERIRREKEIRPEEISLRINKAIEFPIDDLKKIERVFGKLPEYTIHLAEFLDLIPGERLSEYYIYNGNVYLRKEDLIKVWMKAFERNIEKSVNMLYEIRDELPGFFREVLGGIKEVAEQEFGKSGEVKAGTLRPDLFPPCVKNALKGVPQGLRNYAITVLLTSFLSYARICPNPPRRNVRVKDCIDDIRIITDEILPLIIEAANRCSPPLFEDQPNEIKNIWYHLGFGYTANPKLEDSGNSTWYFPPNCDKIRANAPQLCTPDKHCKYVRNPLTYYLRRLYLEGRKNASKGGNERGEKRVLQQ</sequence>
<dbReference type="EMBL" id="AJ248283">
    <property type="protein sequence ID" value="CAB49107.1"/>
    <property type="molecule type" value="Genomic_DNA"/>
</dbReference>
<dbReference type="EMBL" id="HE613800">
    <property type="protein sequence ID" value="CCE69559.1"/>
    <property type="status" value="ALT_INIT"/>
    <property type="molecule type" value="Genomic_DNA"/>
</dbReference>
<dbReference type="PIR" id="D75207">
    <property type="entry name" value="D75207"/>
</dbReference>
<dbReference type="RefSeq" id="WP_048146502.1">
    <property type="nucleotide sequence ID" value="NC_000868.1"/>
</dbReference>
<dbReference type="PDB" id="9F26">
    <property type="method" value="X-ray"/>
    <property type="resolution" value="3.50 A"/>
    <property type="chains" value="B=1-393"/>
</dbReference>
<dbReference type="PDB" id="9F28">
    <property type="method" value="X-ray"/>
    <property type="resolution" value="1.85 A"/>
    <property type="chains" value="B=1-215"/>
</dbReference>
<dbReference type="PDBsum" id="9F26"/>
<dbReference type="PDBsum" id="9F28"/>
<dbReference type="SMR" id="Q9V291"/>
<dbReference type="STRING" id="272844.PAB2235"/>
<dbReference type="KEGG" id="pab:PAB2235"/>
<dbReference type="PATRIC" id="fig|272844.11.peg.197"/>
<dbReference type="eggNOG" id="arCOG03013">
    <property type="taxonomic scope" value="Archaea"/>
</dbReference>
<dbReference type="HOGENOM" id="CLU_691913_0_0_2"/>
<dbReference type="OrthoDB" id="46081at2157"/>
<dbReference type="PhylomeDB" id="Q9V291"/>
<dbReference type="BRENDA" id="2.7.7.102">
    <property type="organism ID" value="5242"/>
</dbReference>
<dbReference type="BRENDA" id="2.7.7.B16">
    <property type="organism ID" value="5242"/>
</dbReference>
<dbReference type="SABIO-RK" id="Q9V291"/>
<dbReference type="Proteomes" id="UP000000810">
    <property type="component" value="Chromosome"/>
</dbReference>
<dbReference type="Proteomes" id="UP000009139">
    <property type="component" value="Chromosome"/>
</dbReference>
<dbReference type="GO" id="GO:1990077">
    <property type="term" value="C:primosome complex"/>
    <property type="evidence" value="ECO:0007669"/>
    <property type="project" value="UniProtKB-KW"/>
</dbReference>
<dbReference type="GO" id="GO:0051539">
    <property type="term" value="F:4 iron, 4 sulfur cluster binding"/>
    <property type="evidence" value="ECO:0007669"/>
    <property type="project" value="UniProtKB-UniRule"/>
</dbReference>
<dbReference type="GO" id="GO:0003899">
    <property type="term" value="F:DNA-directed RNA polymerase activity"/>
    <property type="evidence" value="ECO:0007669"/>
    <property type="project" value="InterPro"/>
</dbReference>
<dbReference type="GO" id="GO:0046872">
    <property type="term" value="F:metal ion binding"/>
    <property type="evidence" value="ECO:0007669"/>
    <property type="project" value="UniProtKB-KW"/>
</dbReference>
<dbReference type="GO" id="GO:0006269">
    <property type="term" value="P:DNA replication, synthesis of primer"/>
    <property type="evidence" value="ECO:0007669"/>
    <property type="project" value="UniProtKB-UniRule"/>
</dbReference>
<dbReference type="CDD" id="cd06560">
    <property type="entry name" value="PriL"/>
    <property type="match status" value="1"/>
</dbReference>
<dbReference type="Gene3D" id="1.20.930.50">
    <property type="match status" value="1"/>
</dbReference>
<dbReference type="Gene3D" id="3.30.200.260">
    <property type="match status" value="1"/>
</dbReference>
<dbReference type="HAMAP" id="MF_00701">
    <property type="entry name" value="DNA_primase_lrg_arc"/>
    <property type="match status" value="1"/>
</dbReference>
<dbReference type="InterPro" id="IPR007238">
    <property type="entry name" value="DNA_primase_lsu_euk/arc"/>
</dbReference>
<dbReference type="InterPro" id="IPR023642">
    <property type="entry name" value="DNA_primase_lsu_PriL"/>
</dbReference>
<dbReference type="NCBIfam" id="NF003051">
    <property type="entry name" value="PRK03968.1"/>
    <property type="match status" value="1"/>
</dbReference>
<dbReference type="Pfam" id="PF04104">
    <property type="entry name" value="DNA_primase_lrg"/>
    <property type="match status" value="1"/>
</dbReference>
<dbReference type="SUPFAM" id="SSF140914">
    <property type="entry name" value="PriB N-terminal domain-like"/>
    <property type="match status" value="1"/>
</dbReference>
<name>PRIL_PYRAB</name>
<keyword id="KW-0002">3D-structure</keyword>
<keyword id="KW-0004">4Fe-4S</keyword>
<keyword id="KW-0235">DNA replication</keyword>
<keyword id="KW-0408">Iron</keyword>
<keyword id="KW-0411">Iron-sulfur</keyword>
<keyword id="KW-0479">Metal-binding</keyword>
<keyword id="KW-0639">Primosome</keyword>
<reference key="1">
    <citation type="journal article" date="2003" name="Mol. Microbiol.">
        <title>An integrated analysis of the genome of the hyperthermophilic archaeon Pyrococcus abyssi.</title>
        <authorList>
            <person name="Cohen G.N."/>
            <person name="Barbe V."/>
            <person name="Flament D."/>
            <person name="Galperin M."/>
            <person name="Heilig R."/>
            <person name="Lecompte O."/>
            <person name="Poch O."/>
            <person name="Prieur D."/>
            <person name="Querellou J."/>
            <person name="Ripp R."/>
            <person name="Thierry J.-C."/>
            <person name="Van der Oost J."/>
            <person name="Weissenbach J."/>
            <person name="Zivanovic Y."/>
            <person name="Forterre P."/>
        </authorList>
    </citation>
    <scope>NUCLEOTIDE SEQUENCE [LARGE SCALE GENOMIC DNA]</scope>
    <source>
        <strain>GE5 / Orsay</strain>
    </source>
</reference>
<reference key="2">
    <citation type="journal article" date="2012" name="Curr. Microbiol.">
        <title>Re-annotation of two hyperthermophilic archaea Pyrococcus abyssi GE5 and Pyrococcus furiosus DSM 3638.</title>
        <authorList>
            <person name="Gao J."/>
            <person name="Wang J."/>
        </authorList>
    </citation>
    <scope>GENOME REANNOTATION</scope>
    <source>
        <strain>GE5 / Orsay</strain>
    </source>
</reference>
<reference key="3">
    <citation type="journal article" date="2007" name="J. Mol. Biol.">
        <title>The heterodimeric primase from the euryarchaeon Pyrococcus abyssi: a multifunctional enzyme for initiation and repair?</title>
        <authorList>
            <person name="Le Breton M."/>
            <person name="Henneke G."/>
            <person name="Norais C."/>
            <person name="Flament D."/>
            <person name="Myllykallio H."/>
            <person name="Querellou J."/>
            <person name="Raffin J.P."/>
        </authorList>
    </citation>
    <scope>FUNCTION</scope>
    <scope>SUBUNIT</scope>
    <source>
        <strain>GE5 / Orsay</strain>
    </source>
</reference>
<feature type="chain" id="PRO_0000046784" description="DNA primase large subunit PriL">
    <location>
        <begin position="1"/>
        <end position="393"/>
    </location>
</feature>
<feature type="binding site" evidence="1">
    <location>
        <position position="230"/>
    </location>
    <ligand>
        <name>[4Fe-4S] cluster</name>
        <dbReference type="ChEBI" id="CHEBI:49883"/>
    </ligand>
</feature>
<feature type="binding site" evidence="1">
    <location>
        <position position="339"/>
    </location>
    <ligand>
        <name>[4Fe-4S] cluster</name>
        <dbReference type="ChEBI" id="CHEBI:49883"/>
    </ligand>
</feature>
<feature type="binding site" evidence="1">
    <location>
        <position position="350"/>
    </location>
    <ligand>
        <name>[4Fe-4S] cluster</name>
        <dbReference type="ChEBI" id="CHEBI:49883"/>
    </ligand>
</feature>
<feature type="binding site" evidence="1">
    <location>
        <position position="356"/>
    </location>
    <ligand>
        <name>[4Fe-4S] cluster</name>
        <dbReference type="ChEBI" id="CHEBI:49883"/>
    </ligand>
</feature>
<feature type="helix" evidence="4">
    <location>
        <begin position="7"/>
        <end position="14"/>
    </location>
</feature>
<feature type="helix" evidence="4">
    <location>
        <begin position="19"/>
        <end position="29"/>
    </location>
</feature>
<feature type="helix" evidence="4">
    <location>
        <begin position="32"/>
        <end position="39"/>
    </location>
</feature>
<feature type="helix" evidence="4">
    <location>
        <begin position="40"/>
        <end position="42"/>
    </location>
</feature>
<feature type="helix" evidence="4">
    <location>
        <begin position="45"/>
        <end position="51"/>
    </location>
</feature>
<feature type="helix" evidence="4">
    <location>
        <begin position="56"/>
        <end position="69"/>
    </location>
</feature>
<feature type="helix" evidence="4">
    <location>
        <begin position="70"/>
        <end position="72"/>
    </location>
</feature>
<feature type="helix" evidence="4">
    <location>
        <begin position="77"/>
        <end position="96"/>
    </location>
</feature>
<feature type="helix" evidence="4">
    <location>
        <begin position="102"/>
        <end position="104"/>
    </location>
</feature>
<feature type="strand" evidence="4">
    <location>
        <begin position="105"/>
        <end position="107"/>
    </location>
</feature>
<feature type="helix" evidence="4">
    <location>
        <begin position="117"/>
        <end position="119"/>
    </location>
</feature>
<feature type="helix" evidence="4">
    <location>
        <begin position="120"/>
        <end position="127"/>
    </location>
</feature>
<feature type="strand" evidence="4">
    <location>
        <begin position="133"/>
        <end position="136"/>
    </location>
</feature>
<feature type="helix" evidence="4">
    <location>
        <begin position="137"/>
        <end position="143"/>
    </location>
</feature>
<feature type="helix" evidence="4">
    <location>
        <begin position="149"/>
        <end position="151"/>
    </location>
</feature>
<feature type="strand" evidence="4">
    <location>
        <begin position="158"/>
        <end position="161"/>
    </location>
</feature>
<feature type="helix" evidence="4">
    <location>
        <begin position="163"/>
        <end position="186"/>
    </location>
</feature>
<feature type="helix" evidence="4">
    <location>
        <begin position="187"/>
        <end position="191"/>
    </location>
</feature>
<feature type="helix" evidence="4">
    <location>
        <begin position="195"/>
        <end position="209"/>
    </location>
</feature>
<gene>
    <name evidence="1" type="primary">priL</name>
    <name type="synonym">priB</name>
    <name type="ordered locus">PYRAB01830</name>
    <name type="ORF">PAB2235</name>
</gene>
<comment type="function">
    <text evidence="1 2">Regulatory subunit of DNA primase, an RNA polymerase that catalyzes the synthesis of short RNA molecules used as primers for DNA polymerase during DNA replication. Stabilizes and modulates the activity of the small subunit, increasing the rate of DNA synthesis, and conferring RNA synthesis capability. The DNA polymerase activity may enable DNA primase to also catalyze primer extension after primer synthesis. May also play a role in DNA repair. Displays gap-filling and strand-displacement activities.</text>
</comment>
<comment type="cofactor">
    <cofactor evidence="1">
        <name>[4Fe-4S] cluster</name>
        <dbReference type="ChEBI" id="CHEBI:49883"/>
    </cofactor>
    <text evidence="1">Binds 1 [4Fe-4S] cluster.</text>
</comment>
<comment type="subunit">
    <text evidence="1 2">Heterodimer of a small subunit (PriS) and a large subunit (PriL).</text>
</comment>
<comment type="similarity">
    <text evidence="1">Belongs to the eukaryotic-type primase large subunit family.</text>
</comment>
<comment type="sequence caution" evidence="3">
    <conflict type="erroneous initiation">
        <sequence resource="EMBL-CDS" id="CCE69559"/>
    </conflict>
    <text>Truncated N-terminus.</text>
</comment>
<protein>
    <recommendedName>
        <fullName evidence="1">DNA primase large subunit PriL</fullName>
    </recommendedName>
    <alternativeName>
        <fullName>DNA primase 46 kDa subunit</fullName>
        <shortName>Pabp46</shortName>
        <shortName>p46</shortName>
    </alternativeName>
</protein>
<organism>
    <name type="scientific">Pyrococcus abyssi (strain GE5 / Orsay)</name>
    <dbReference type="NCBI Taxonomy" id="272844"/>
    <lineage>
        <taxon>Archaea</taxon>
        <taxon>Methanobacteriati</taxon>
        <taxon>Methanobacteriota</taxon>
        <taxon>Thermococci</taxon>
        <taxon>Thermococcales</taxon>
        <taxon>Thermococcaceae</taxon>
        <taxon>Pyrococcus</taxon>
    </lineage>
</organism>
<evidence type="ECO:0000255" key="1">
    <source>
        <dbReference type="HAMAP-Rule" id="MF_00701"/>
    </source>
</evidence>
<evidence type="ECO:0000269" key="2">
    <source>
    </source>
</evidence>
<evidence type="ECO:0000305" key="3"/>
<evidence type="ECO:0007829" key="4">
    <source>
        <dbReference type="PDB" id="9F28"/>
    </source>
</evidence>
<accession>Q9V291</accession>
<accession>G8ZG18</accession>
<proteinExistence type="evidence at protein level"/>